<name>MY1R1_SOLTU</name>
<reference evidence="6" key="1">
    <citation type="journal article" date="2011" name="Plant Physiol.">
        <title>Expression of StMYB1R-1, a novel potato single MYB-like domain transcription factor, increases drought tolerance.</title>
        <authorList>
            <person name="Shin D."/>
            <person name="Moon S.J."/>
            <person name="Han S."/>
            <person name="Kim B.G."/>
            <person name="Park S.R."/>
            <person name="Lee S.K."/>
            <person name="Yoon H.J."/>
            <person name="Lee H.E."/>
            <person name="Kwon H.B."/>
            <person name="Baek D."/>
            <person name="Yi B.Y."/>
            <person name="Byun M.O."/>
        </authorList>
    </citation>
    <scope>NUCLEOTIDE SEQUENCE [MRNA]</scope>
    <scope>FUNCTION</scope>
    <scope>SUBCELLULAR LOCATION</scope>
    <scope>INDUCTION</scope>
    <source>
        <strain evidence="3">cv. Superior</strain>
    </source>
</reference>
<reference evidence="7" key="2">
    <citation type="submission" date="2005-11" db="EMBL/GenBank/DDBJ databases">
        <title>Full length sequencing of Solanum tuberosum cv. Kuras genes.</title>
        <authorList>
            <person name="Nielsen H.V."/>
            <person name="Nielsen K.L."/>
            <person name="Emmersen J.M.G."/>
        </authorList>
    </citation>
    <scope>NUCLEOTIDE SEQUENCE [MRNA]</scope>
    <source>
        <strain evidence="4">cv. Kuras</strain>
    </source>
</reference>
<organism>
    <name type="scientific">Solanum tuberosum</name>
    <name type="common">Potato</name>
    <dbReference type="NCBI Taxonomy" id="4113"/>
    <lineage>
        <taxon>Eukaryota</taxon>
        <taxon>Viridiplantae</taxon>
        <taxon>Streptophyta</taxon>
        <taxon>Embryophyta</taxon>
        <taxon>Tracheophyta</taxon>
        <taxon>Spermatophyta</taxon>
        <taxon>Magnoliopsida</taxon>
        <taxon>eudicotyledons</taxon>
        <taxon>Gunneridae</taxon>
        <taxon>Pentapetalae</taxon>
        <taxon>asterids</taxon>
        <taxon>lamiids</taxon>
        <taxon>Solanales</taxon>
        <taxon>Solanaceae</taxon>
        <taxon>Solanoideae</taxon>
        <taxon>Solaneae</taxon>
        <taxon>Solanum</taxon>
    </lineage>
</organism>
<comment type="function">
    <text evidence="3">Binds selectively to the DNA sequence 5'-[GA]GATAA-3' and may act as a transcription factor involved in the regulation of drought-responsive genes. Enhances stomatal closure in response to abscisic acid (ABA). Confers drought and salt tolerance.</text>
</comment>
<comment type="subcellular location">
    <subcellularLocation>
        <location evidence="1 3">Nucleus</location>
    </subcellularLocation>
    <subcellularLocation>
        <location evidence="3">Cytoplasm</location>
        <location evidence="3">Cytosol</location>
    </subcellularLocation>
    <text evidence="3">Localizes predominantly to the nucleus and, to a lesser extent, to the cytosol.</text>
</comment>
<comment type="induction">
    <text evidence="3">Up-regulated by drought, high salinity, and ABA.</text>
</comment>
<proteinExistence type="evidence at transcript level"/>
<sequence>MSSVYSDKSSSTPAVTGGGFGGEIMLFGVRVKVDPMRKSVSLNDLSQYEHPNANNNNNGGDNNESSKVAQDEGYASADDAVQHQSNSGRERKRGVPWTEEEHKLFLLGLQKVGKGDWRGISRNFVKTRTPTQVASHAQKYFLRRSNLNRRRRRSSLFDITTDSVSVMPIEEVENKQEIPVVAPATLPTTKTNAFPVAPTVGPIIFPVQIDKSREYPTLLRHDHGNSSMLVGPVPMFSMPNPSTAIDLNANHNSTIEPSSLSLRLSLSLDQGQASSTRHSAYNVMSSFSNGESIIRVA</sequence>
<evidence type="ECO:0000255" key="1">
    <source>
        <dbReference type="PROSITE-ProRule" id="PRU00625"/>
    </source>
</evidence>
<evidence type="ECO:0000256" key="2">
    <source>
        <dbReference type="SAM" id="MobiDB-lite"/>
    </source>
</evidence>
<evidence type="ECO:0000269" key="3">
    <source>
    </source>
</evidence>
<evidence type="ECO:0000269" key="4">
    <source ref="2"/>
</evidence>
<evidence type="ECO:0000303" key="5">
    <source>
    </source>
</evidence>
<evidence type="ECO:0000305" key="6"/>
<evidence type="ECO:0000312" key="7">
    <source>
        <dbReference type="EMBL" id="ABB86258.1"/>
    </source>
</evidence>
<accession>Q2V9B0</accession>
<feature type="chain" id="PRO_0000407916" description="Transcription factor MYB1R1">
    <location>
        <begin position="1"/>
        <end position="297"/>
    </location>
</feature>
<feature type="domain" description="HTH myb-type" evidence="1">
    <location>
        <begin position="89"/>
        <end position="145"/>
    </location>
</feature>
<feature type="DNA-binding region" description="H-T-H motif" evidence="1">
    <location>
        <begin position="117"/>
        <end position="141"/>
    </location>
</feature>
<feature type="region of interest" description="Disordered" evidence="2">
    <location>
        <begin position="44"/>
        <end position="96"/>
    </location>
</feature>
<feature type="compositionally biased region" description="Low complexity" evidence="2">
    <location>
        <begin position="52"/>
        <end position="63"/>
    </location>
</feature>
<protein>
    <recommendedName>
        <fullName>Transcription factor MYB1R1</fullName>
    </recommendedName>
    <alternativeName>
        <fullName evidence="5">Myb-related protein R1</fullName>
        <shortName evidence="5">StMYB1R-1</shortName>
    </alternativeName>
</protein>
<keyword id="KW-0963">Cytoplasm</keyword>
<keyword id="KW-0238">DNA-binding</keyword>
<keyword id="KW-0539">Nucleus</keyword>
<keyword id="KW-1185">Reference proteome</keyword>
<keyword id="KW-0346">Stress response</keyword>
<keyword id="KW-0804">Transcription</keyword>
<keyword id="KW-0805">Transcription regulation</keyword>
<dbReference type="EMBL" id="DQ284470">
    <property type="protein sequence ID" value="ABB86258.1"/>
    <property type="molecule type" value="mRNA"/>
</dbReference>
<dbReference type="RefSeq" id="NP_001275346.1">
    <property type="nucleotide sequence ID" value="NM_001288417.1"/>
</dbReference>
<dbReference type="SMR" id="Q2V9B0"/>
<dbReference type="FunCoup" id="Q2V9B0">
    <property type="interactions" value="314"/>
</dbReference>
<dbReference type="STRING" id="4113.Q2V9B0"/>
<dbReference type="PaxDb" id="4113-PGSC0003DMT400083032"/>
<dbReference type="EnsemblPlants" id="RHC06H1G2525.2.1">
    <property type="protein sequence ID" value="RHC06H1G2525.2.1"/>
    <property type="gene ID" value="RHC06H1G2525.2"/>
</dbReference>
<dbReference type="GeneID" id="102577613"/>
<dbReference type="Gramene" id="RHC06H1G2525.2.1">
    <property type="protein sequence ID" value="RHC06H1G2525.2.1"/>
    <property type="gene ID" value="RHC06H1G2525.2"/>
</dbReference>
<dbReference type="KEGG" id="sot:102577613"/>
<dbReference type="eggNOG" id="ENOG502R4SD">
    <property type="taxonomic scope" value="Eukaryota"/>
</dbReference>
<dbReference type="InParanoid" id="Q2V9B0"/>
<dbReference type="OrthoDB" id="118550at2759"/>
<dbReference type="Proteomes" id="UP000011115">
    <property type="component" value="Unassembled WGS sequence"/>
</dbReference>
<dbReference type="ExpressionAtlas" id="Q2V9B0">
    <property type="expression patterns" value="baseline"/>
</dbReference>
<dbReference type="GO" id="GO:0005829">
    <property type="term" value="C:cytosol"/>
    <property type="evidence" value="ECO:0007669"/>
    <property type="project" value="UniProtKB-SubCell"/>
</dbReference>
<dbReference type="GO" id="GO:0005634">
    <property type="term" value="C:nucleus"/>
    <property type="evidence" value="ECO:0007669"/>
    <property type="project" value="UniProtKB-SubCell"/>
</dbReference>
<dbReference type="GO" id="GO:0000976">
    <property type="term" value="F:transcription cis-regulatory region binding"/>
    <property type="evidence" value="ECO:0007669"/>
    <property type="project" value="UniProtKB-ARBA"/>
</dbReference>
<dbReference type="GO" id="GO:0010597">
    <property type="term" value="P:green leaf volatile biosynthetic process"/>
    <property type="evidence" value="ECO:0007669"/>
    <property type="project" value="UniProtKB-ARBA"/>
</dbReference>
<dbReference type="GO" id="GO:0006355">
    <property type="term" value="P:regulation of DNA-templated transcription"/>
    <property type="evidence" value="ECO:0007669"/>
    <property type="project" value="UniProtKB-ARBA"/>
</dbReference>
<dbReference type="CDD" id="cd00167">
    <property type="entry name" value="SANT"/>
    <property type="match status" value="1"/>
</dbReference>
<dbReference type="FunFam" id="1.10.10.60:FF:000009">
    <property type="entry name" value="transcription factor MYB1R1"/>
    <property type="match status" value="1"/>
</dbReference>
<dbReference type="Gene3D" id="1.10.10.60">
    <property type="entry name" value="Homeodomain-like"/>
    <property type="match status" value="1"/>
</dbReference>
<dbReference type="InterPro" id="IPR009057">
    <property type="entry name" value="Homeodomain-like_sf"/>
</dbReference>
<dbReference type="InterPro" id="IPR017930">
    <property type="entry name" value="Myb_dom"/>
</dbReference>
<dbReference type="InterPro" id="IPR006447">
    <property type="entry name" value="Myb_dom_plants"/>
</dbReference>
<dbReference type="InterPro" id="IPR052245">
    <property type="entry name" value="Plant_Stress_Dev_TF"/>
</dbReference>
<dbReference type="InterPro" id="IPR001005">
    <property type="entry name" value="SANT/Myb"/>
</dbReference>
<dbReference type="InterPro" id="IPR017884">
    <property type="entry name" value="SANT_dom"/>
</dbReference>
<dbReference type="NCBIfam" id="TIGR01557">
    <property type="entry name" value="myb_SHAQKYF"/>
    <property type="match status" value="1"/>
</dbReference>
<dbReference type="PANTHER" id="PTHR44191:SF84">
    <property type="entry name" value="F25A4.19 PROTEIN"/>
    <property type="match status" value="1"/>
</dbReference>
<dbReference type="PANTHER" id="PTHR44191">
    <property type="entry name" value="TRANSCRIPTION FACTOR KUA1"/>
    <property type="match status" value="1"/>
</dbReference>
<dbReference type="Pfam" id="PF00249">
    <property type="entry name" value="Myb_DNA-binding"/>
    <property type="match status" value="1"/>
</dbReference>
<dbReference type="SMART" id="SM00717">
    <property type="entry name" value="SANT"/>
    <property type="match status" value="1"/>
</dbReference>
<dbReference type="SUPFAM" id="SSF46689">
    <property type="entry name" value="Homeodomain-like"/>
    <property type="match status" value="1"/>
</dbReference>
<dbReference type="PROSITE" id="PS51294">
    <property type="entry name" value="HTH_MYB"/>
    <property type="match status" value="1"/>
</dbReference>